<gene>
    <name evidence="1" type="primary">spx</name>
    <name type="ordered locus">ABC2528</name>
</gene>
<dbReference type="EMBL" id="AP006627">
    <property type="protein sequence ID" value="BAD65063.1"/>
    <property type="molecule type" value="Genomic_DNA"/>
</dbReference>
<dbReference type="SMR" id="Q5WEZ7"/>
<dbReference type="STRING" id="66692.ABC2528"/>
<dbReference type="KEGG" id="bcl:ABC2528"/>
<dbReference type="eggNOG" id="COG1393">
    <property type="taxonomic scope" value="Bacteria"/>
</dbReference>
<dbReference type="HOGENOM" id="CLU_116644_1_1_9"/>
<dbReference type="OrthoDB" id="9794155at2"/>
<dbReference type="Proteomes" id="UP000001168">
    <property type="component" value="Chromosome"/>
</dbReference>
<dbReference type="GO" id="GO:0005737">
    <property type="term" value="C:cytoplasm"/>
    <property type="evidence" value="ECO:0007669"/>
    <property type="project" value="UniProtKB-SubCell"/>
</dbReference>
<dbReference type="GO" id="GO:0045892">
    <property type="term" value="P:negative regulation of DNA-templated transcription"/>
    <property type="evidence" value="ECO:0007669"/>
    <property type="project" value="InterPro"/>
</dbReference>
<dbReference type="CDD" id="cd03032">
    <property type="entry name" value="ArsC_Spx"/>
    <property type="match status" value="1"/>
</dbReference>
<dbReference type="Gene3D" id="3.40.30.10">
    <property type="entry name" value="Glutaredoxin"/>
    <property type="match status" value="1"/>
</dbReference>
<dbReference type="HAMAP" id="MF_01132">
    <property type="entry name" value="Spx"/>
    <property type="match status" value="1"/>
</dbReference>
<dbReference type="InterPro" id="IPR006660">
    <property type="entry name" value="Arsenate_reductase-like"/>
</dbReference>
<dbReference type="InterPro" id="IPR023731">
    <property type="entry name" value="Spx"/>
</dbReference>
<dbReference type="InterPro" id="IPR036249">
    <property type="entry name" value="Thioredoxin-like_sf"/>
</dbReference>
<dbReference type="InterPro" id="IPR006504">
    <property type="entry name" value="Tscrpt_reg_Spx/MgsR"/>
</dbReference>
<dbReference type="NCBIfam" id="TIGR01617">
    <property type="entry name" value="arsC_related"/>
    <property type="match status" value="1"/>
</dbReference>
<dbReference type="NCBIfam" id="NF002459">
    <property type="entry name" value="PRK01655.1"/>
    <property type="match status" value="1"/>
</dbReference>
<dbReference type="NCBIfam" id="NF009210">
    <property type="entry name" value="PRK12559.1"/>
    <property type="match status" value="1"/>
</dbReference>
<dbReference type="PANTHER" id="PTHR30041">
    <property type="entry name" value="ARSENATE REDUCTASE"/>
    <property type="match status" value="1"/>
</dbReference>
<dbReference type="PANTHER" id="PTHR30041:SF7">
    <property type="entry name" value="GLOBAL TRANSCRIPTIONAL REGULATOR SPX"/>
    <property type="match status" value="1"/>
</dbReference>
<dbReference type="Pfam" id="PF03960">
    <property type="entry name" value="ArsC"/>
    <property type="match status" value="1"/>
</dbReference>
<dbReference type="SUPFAM" id="SSF52833">
    <property type="entry name" value="Thioredoxin-like"/>
    <property type="match status" value="1"/>
</dbReference>
<dbReference type="PROSITE" id="PS51353">
    <property type="entry name" value="ARSC"/>
    <property type="match status" value="1"/>
</dbReference>
<comment type="function">
    <text evidence="1">Global transcriptional regulator that plays a key role in stress response and exerts either positive or negative regulation of genes. Acts by interacting with the C-terminal domain of the alpha subunit of the RNA polymerase (RNAP). This interaction can enhance binding of RNAP to the promoter region of target genes and stimulate their transcription, or block interaction of RNAP with activator.</text>
</comment>
<comment type="subunit">
    <text evidence="1">Interacts with the C-terminal domain of the alpha subunit of the RNAP.</text>
</comment>
<comment type="subcellular location">
    <subcellularLocation>
        <location evidence="1">Cytoplasm</location>
    </subcellularLocation>
</comment>
<comment type="similarity">
    <text evidence="1">Belongs to the ArsC family. Spx subfamily.</text>
</comment>
<name>SPX_SHOC1</name>
<accession>Q5WEZ7</accession>
<sequence>MVTLLTSPSCTSCRKAKAWLEEHDIPFEERNIFASPLSVEEVKQVVRMTEDGTDEIISTRSKVFQELDVELESLPLQKLFTIISDNPGLLRRPIIFDEKRLQVGYNDAEIRRFLPRKVRTFQLQEAQRLVN</sequence>
<organism>
    <name type="scientific">Shouchella clausii (strain KSM-K16)</name>
    <name type="common">Alkalihalobacillus clausii</name>
    <dbReference type="NCBI Taxonomy" id="66692"/>
    <lineage>
        <taxon>Bacteria</taxon>
        <taxon>Bacillati</taxon>
        <taxon>Bacillota</taxon>
        <taxon>Bacilli</taxon>
        <taxon>Bacillales</taxon>
        <taxon>Bacillaceae</taxon>
        <taxon>Shouchella</taxon>
    </lineage>
</organism>
<evidence type="ECO:0000255" key="1">
    <source>
        <dbReference type="HAMAP-Rule" id="MF_01132"/>
    </source>
</evidence>
<protein>
    <recommendedName>
        <fullName evidence="1">Global transcriptional regulator Spx</fullName>
    </recommendedName>
</protein>
<keyword id="KW-0963">Cytoplasm</keyword>
<keyword id="KW-1015">Disulfide bond</keyword>
<keyword id="KW-0676">Redox-active center</keyword>
<keyword id="KW-1185">Reference proteome</keyword>
<keyword id="KW-0804">Transcription</keyword>
<keyword id="KW-0805">Transcription regulation</keyword>
<reference key="1">
    <citation type="submission" date="2003-10" db="EMBL/GenBank/DDBJ databases">
        <title>The complete genome sequence of the alkaliphilic Bacillus clausii KSM-K16.</title>
        <authorList>
            <person name="Takaki Y."/>
            <person name="Kageyama Y."/>
            <person name="Shimamura S."/>
            <person name="Suzuki H."/>
            <person name="Nishi S."/>
            <person name="Hatada Y."/>
            <person name="Kawai S."/>
            <person name="Ito S."/>
            <person name="Horikoshi K."/>
        </authorList>
    </citation>
    <scope>NUCLEOTIDE SEQUENCE [LARGE SCALE GENOMIC DNA]</scope>
    <source>
        <strain>KSM-K16</strain>
    </source>
</reference>
<feature type="chain" id="PRO_0000162550" description="Global transcriptional regulator Spx">
    <location>
        <begin position="1"/>
        <end position="131"/>
    </location>
</feature>
<feature type="disulfide bond" description="Redox-active" evidence="1">
    <location>
        <begin position="10"/>
        <end position="13"/>
    </location>
</feature>
<proteinExistence type="inferred from homology"/>